<keyword id="KW-0963">Cytoplasm</keyword>
<keyword id="KW-0227">DNA damage</keyword>
<keyword id="KW-0234">DNA repair</keyword>
<keyword id="KW-0378">Hydrolase</keyword>
<keyword id="KW-1185">Reference proteome</keyword>
<evidence type="ECO:0000255" key="1">
    <source>
        <dbReference type="HAMAP-Rule" id="MF_00148"/>
    </source>
</evidence>
<reference key="1">
    <citation type="journal article" date="2003" name="J. Bacteriol.">
        <title>Comparative analyses of the complete genome sequences of Pierce's disease and citrus variegated chlorosis strains of Xylella fastidiosa.</title>
        <authorList>
            <person name="Van Sluys M.A."/>
            <person name="de Oliveira M.C."/>
            <person name="Monteiro-Vitorello C.B."/>
            <person name="Miyaki C.Y."/>
            <person name="Furlan L.R."/>
            <person name="Camargo L.E.A."/>
            <person name="da Silva A.C.R."/>
            <person name="Moon D.H."/>
            <person name="Takita M.A."/>
            <person name="Lemos E.G.M."/>
            <person name="Machado M.A."/>
            <person name="Ferro M.I.T."/>
            <person name="da Silva F.R."/>
            <person name="Goldman M.H.S."/>
            <person name="Goldman G.H."/>
            <person name="Lemos M.V.F."/>
            <person name="El-Dorry H."/>
            <person name="Tsai S.M."/>
            <person name="Carrer H."/>
            <person name="Carraro D.M."/>
            <person name="de Oliveira R.C."/>
            <person name="Nunes L.R."/>
            <person name="Siqueira W.J."/>
            <person name="Coutinho L.L."/>
            <person name="Kimura E.T."/>
            <person name="Ferro E.S."/>
            <person name="Harakava R."/>
            <person name="Kuramae E.E."/>
            <person name="Marino C.L."/>
            <person name="Giglioti E."/>
            <person name="Abreu I.L."/>
            <person name="Alves L.M.C."/>
            <person name="do Amaral A.M."/>
            <person name="Baia G.S."/>
            <person name="Blanco S.R."/>
            <person name="Brito M.S."/>
            <person name="Cannavan F.S."/>
            <person name="Celestino A.V."/>
            <person name="da Cunha A.F."/>
            <person name="Fenille R.C."/>
            <person name="Ferro J.A."/>
            <person name="Formighieri E.F."/>
            <person name="Kishi L.T."/>
            <person name="Leoni S.G."/>
            <person name="Oliveira A.R."/>
            <person name="Rosa V.E. Jr."/>
            <person name="Sassaki F.T."/>
            <person name="Sena J.A.D."/>
            <person name="de Souza A.A."/>
            <person name="Truffi D."/>
            <person name="Tsukumo F."/>
            <person name="Yanai G.M."/>
            <person name="Zaros L.G."/>
            <person name="Civerolo E.L."/>
            <person name="Simpson A.J.G."/>
            <person name="Almeida N.F. Jr."/>
            <person name="Setubal J.C."/>
            <person name="Kitajima J.P."/>
        </authorList>
    </citation>
    <scope>NUCLEOTIDE SEQUENCE [LARGE SCALE GENOMIC DNA]</scope>
    <source>
        <strain>Temecula1 / ATCC 700964</strain>
    </source>
</reference>
<comment type="function">
    <text evidence="1">Excises uracil residues from the DNA which can arise as a result of misincorporation of dUMP residues by DNA polymerase or due to deamination of cytosine.</text>
</comment>
<comment type="catalytic activity">
    <reaction evidence="1">
        <text>Hydrolyzes single-stranded DNA or mismatched double-stranded DNA and polynucleotides, releasing free uracil.</text>
        <dbReference type="EC" id="3.2.2.27"/>
    </reaction>
</comment>
<comment type="subcellular location">
    <subcellularLocation>
        <location evidence="1">Cytoplasm</location>
    </subcellularLocation>
</comment>
<comment type="similarity">
    <text evidence="1">Belongs to the uracil-DNA glycosylase (UDG) superfamily. UNG family.</text>
</comment>
<protein>
    <recommendedName>
        <fullName evidence="1">Uracil-DNA glycosylase</fullName>
        <shortName evidence="1">UDG</shortName>
        <ecNumber evidence="1">3.2.2.27</ecNumber>
    </recommendedName>
</protein>
<gene>
    <name evidence="1" type="primary">ung</name>
    <name type="ordered locus">PD_2049</name>
</gene>
<name>UNG_XYLFT</name>
<dbReference type="EC" id="3.2.2.27" evidence="1"/>
<dbReference type="EMBL" id="AE009442">
    <property type="protein sequence ID" value="AAO29873.1"/>
    <property type="molecule type" value="Genomic_DNA"/>
</dbReference>
<dbReference type="RefSeq" id="WP_004087510.1">
    <property type="nucleotide sequence ID" value="NC_004556.1"/>
</dbReference>
<dbReference type="SMR" id="Q879Z0"/>
<dbReference type="GeneID" id="93905911"/>
<dbReference type="KEGG" id="xft:PD_2049"/>
<dbReference type="HOGENOM" id="CLU_032162_3_0_6"/>
<dbReference type="Proteomes" id="UP000002516">
    <property type="component" value="Chromosome"/>
</dbReference>
<dbReference type="GO" id="GO:0005737">
    <property type="term" value="C:cytoplasm"/>
    <property type="evidence" value="ECO:0007669"/>
    <property type="project" value="UniProtKB-SubCell"/>
</dbReference>
<dbReference type="GO" id="GO:0004844">
    <property type="term" value="F:uracil DNA N-glycosylase activity"/>
    <property type="evidence" value="ECO:0007669"/>
    <property type="project" value="UniProtKB-UniRule"/>
</dbReference>
<dbReference type="GO" id="GO:0097510">
    <property type="term" value="P:base-excision repair, AP site formation via deaminated base removal"/>
    <property type="evidence" value="ECO:0007669"/>
    <property type="project" value="TreeGrafter"/>
</dbReference>
<dbReference type="CDD" id="cd10027">
    <property type="entry name" value="UDG-F1-like"/>
    <property type="match status" value="1"/>
</dbReference>
<dbReference type="FunFam" id="3.40.470.10:FF:000001">
    <property type="entry name" value="Uracil-DNA glycosylase"/>
    <property type="match status" value="1"/>
</dbReference>
<dbReference type="Gene3D" id="3.40.470.10">
    <property type="entry name" value="Uracil-DNA glycosylase-like domain"/>
    <property type="match status" value="1"/>
</dbReference>
<dbReference type="HAMAP" id="MF_00148">
    <property type="entry name" value="UDG"/>
    <property type="match status" value="1"/>
</dbReference>
<dbReference type="InterPro" id="IPR002043">
    <property type="entry name" value="UDG_fam1"/>
</dbReference>
<dbReference type="InterPro" id="IPR018085">
    <property type="entry name" value="Ura-DNA_Glyclase_AS"/>
</dbReference>
<dbReference type="InterPro" id="IPR005122">
    <property type="entry name" value="Uracil-DNA_glycosylase-like"/>
</dbReference>
<dbReference type="InterPro" id="IPR036895">
    <property type="entry name" value="Uracil-DNA_glycosylase-like_sf"/>
</dbReference>
<dbReference type="NCBIfam" id="NF003588">
    <property type="entry name" value="PRK05254.1-1"/>
    <property type="match status" value="1"/>
</dbReference>
<dbReference type="NCBIfam" id="NF003589">
    <property type="entry name" value="PRK05254.1-2"/>
    <property type="match status" value="1"/>
</dbReference>
<dbReference type="NCBIfam" id="NF003591">
    <property type="entry name" value="PRK05254.1-4"/>
    <property type="match status" value="1"/>
</dbReference>
<dbReference type="NCBIfam" id="NF003592">
    <property type="entry name" value="PRK05254.1-5"/>
    <property type="match status" value="1"/>
</dbReference>
<dbReference type="NCBIfam" id="TIGR00628">
    <property type="entry name" value="ung"/>
    <property type="match status" value="1"/>
</dbReference>
<dbReference type="PANTHER" id="PTHR11264">
    <property type="entry name" value="URACIL-DNA GLYCOSYLASE"/>
    <property type="match status" value="1"/>
</dbReference>
<dbReference type="PANTHER" id="PTHR11264:SF0">
    <property type="entry name" value="URACIL-DNA GLYCOSYLASE"/>
    <property type="match status" value="1"/>
</dbReference>
<dbReference type="Pfam" id="PF03167">
    <property type="entry name" value="UDG"/>
    <property type="match status" value="1"/>
</dbReference>
<dbReference type="SMART" id="SM00986">
    <property type="entry name" value="UDG"/>
    <property type="match status" value="1"/>
</dbReference>
<dbReference type="SMART" id="SM00987">
    <property type="entry name" value="UreE_C"/>
    <property type="match status" value="1"/>
</dbReference>
<dbReference type="SUPFAM" id="SSF52141">
    <property type="entry name" value="Uracil-DNA glycosylase-like"/>
    <property type="match status" value="1"/>
</dbReference>
<dbReference type="PROSITE" id="PS00130">
    <property type="entry name" value="U_DNA_GLYCOSYLASE"/>
    <property type="match status" value="1"/>
</dbReference>
<feature type="chain" id="PRO_0000176169" description="Uracil-DNA glycosylase">
    <location>
        <begin position="1"/>
        <end position="253"/>
    </location>
</feature>
<feature type="active site" description="Proton acceptor" evidence="1">
    <location>
        <position position="79"/>
    </location>
</feature>
<sequence>MNEQGKAINSSAESRIQLESSWKAHVGNWLLRPEMRDLSSFLRARKVAGVSVYPPGSQIFAAFEATPFQRVKAVILGQDPYHGQGQAHGLCFSVRPGMPLPPSLLNIYKELEEDLGLLRPDHGCLLPWAKRGVLLLNAVLTVEDGRAGAHQGKGWEGFTDHVVDTLNREREGLVFMLWGSYAQAKGKAIDTRRHLVLKAPHPSPLSAHRGFLGCRHFSLCNQYLSQHGLGMVDWSLPPCIALDGAILNGRIAV</sequence>
<organism>
    <name type="scientific">Xylella fastidiosa (strain Temecula1 / ATCC 700964)</name>
    <dbReference type="NCBI Taxonomy" id="183190"/>
    <lineage>
        <taxon>Bacteria</taxon>
        <taxon>Pseudomonadati</taxon>
        <taxon>Pseudomonadota</taxon>
        <taxon>Gammaproteobacteria</taxon>
        <taxon>Lysobacterales</taxon>
        <taxon>Lysobacteraceae</taxon>
        <taxon>Xylella</taxon>
    </lineage>
</organism>
<proteinExistence type="inferred from homology"/>
<accession>Q879Z0</accession>